<gene>
    <name evidence="1" type="primary">rph</name>
</gene>
<sequence length="238" mass="25894">MRPNNRANNQVREIKITRNYTRYAEGSVLIEFGETKVLCNATVEESVPRFLKGQQQGWVTAEYGMLPRATHSRTQREAAKGKQGGRTMEIQRLIARSLRAVVDLKALGERTVTVDCDVIQADGGTRTASITGACVALYDAMNKLVANGTLKTNPMKGLVAAISVGIVAGEAVCDLEYLEDSNAETDMNVVMVQDGRLVEVQGTAEGEPFSHQELLTLLDLAKQGISQLVEAQRKALAE</sequence>
<proteinExistence type="inferred from homology"/>
<accession>Q9AES0</accession>
<organism>
    <name type="scientific">Mannheimia haemolytica</name>
    <name type="common">Pasteurella haemolytica</name>
    <dbReference type="NCBI Taxonomy" id="75985"/>
    <lineage>
        <taxon>Bacteria</taxon>
        <taxon>Pseudomonadati</taxon>
        <taxon>Pseudomonadota</taxon>
        <taxon>Gammaproteobacteria</taxon>
        <taxon>Pasteurellales</taxon>
        <taxon>Pasteurellaceae</taxon>
        <taxon>Mannheimia</taxon>
    </lineage>
</organism>
<feature type="chain" id="PRO_0000139918" description="Ribonuclease PH">
    <location>
        <begin position="1"/>
        <end position="238"/>
    </location>
</feature>
<feature type="binding site" evidence="1">
    <location>
        <position position="86"/>
    </location>
    <ligand>
        <name>phosphate</name>
        <dbReference type="ChEBI" id="CHEBI:43474"/>
        <note>substrate</note>
    </ligand>
</feature>
<feature type="binding site" evidence="1">
    <location>
        <begin position="124"/>
        <end position="126"/>
    </location>
    <ligand>
        <name>phosphate</name>
        <dbReference type="ChEBI" id="CHEBI:43474"/>
        <note>substrate</note>
    </ligand>
</feature>
<evidence type="ECO:0000255" key="1">
    <source>
        <dbReference type="HAMAP-Rule" id="MF_00564"/>
    </source>
</evidence>
<name>RNPH_MANHA</name>
<reference key="1">
    <citation type="submission" date="2001-03" db="EMBL/GenBank/DDBJ databases">
        <title>Putative TonB dependent receptor of Mannheimia haemolytica.</title>
        <authorList>
            <person name="Lo R.Y."/>
            <person name="Graham M.R."/>
        </authorList>
    </citation>
    <scope>NUCLEOTIDE SEQUENCE [GENOMIC DNA]</scope>
</reference>
<protein>
    <recommendedName>
        <fullName evidence="1">Ribonuclease PH</fullName>
        <shortName evidence="1">RNase PH</shortName>
        <ecNumber evidence="1">2.7.7.56</ecNumber>
    </recommendedName>
    <alternativeName>
        <fullName evidence="1">tRNA nucleotidyltransferase</fullName>
    </alternativeName>
</protein>
<comment type="function">
    <text evidence="1">Phosphorolytic 3'-5' exoribonuclease that plays an important role in tRNA 3'-end maturation. Removes nucleotide residues following the 3'-CCA terminus of tRNAs; can also add nucleotides to the ends of RNA molecules by using nucleoside diphosphates as substrates, but this may not be physiologically important. Probably plays a role in initiation of 16S rRNA degradation (leading to ribosome degradation) during starvation.</text>
</comment>
<comment type="catalytic activity">
    <reaction evidence="1">
        <text>tRNA(n+1) + phosphate = tRNA(n) + a ribonucleoside 5'-diphosphate</text>
        <dbReference type="Rhea" id="RHEA:10628"/>
        <dbReference type="Rhea" id="RHEA-COMP:17343"/>
        <dbReference type="Rhea" id="RHEA-COMP:17344"/>
        <dbReference type="ChEBI" id="CHEBI:43474"/>
        <dbReference type="ChEBI" id="CHEBI:57930"/>
        <dbReference type="ChEBI" id="CHEBI:173114"/>
        <dbReference type="EC" id="2.7.7.56"/>
    </reaction>
</comment>
<comment type="subunit">
    <text evidence="1">Homohexameric ring arranged as a trimer of dimers.</text>
</comment>
<comment type="similarity">
    <text evidence="1">Belongs to the RNase PH family.</text>
</comment>
<keyword id="KW-0548">Nucleotidyltransferase</keyword>
<keyword id="KW-0694">RNA-binding</keyword>
<keyword id="KW-0698">rRNA processing</keyword>
<keyword id="KW-0808">Transferase</keyword>
<keyword id="KW-0819">tRNA processing</keyword>
<keyword id="KW-0820">tRNA-binding</keyword>
<dbReference type="EC" id="2.7.7.56" evidence="1"/>
<dbReference type="EMBL" id="AY028475">
    <property type="protein sequence ID" value="AAK29744.1"/>
    <property type="molecule type" value="Genomic_DNA"/>
</dbReference>
<dbReference type="SMR" id="Q9AES0"/>
<dbReference type="STRING" id="75985.WC39_11515"/>
<dbReference type="GO" id="GO:0000175">
    <property type="term" value="F:3'-5'-RNA exonuclease activity"/>
    <property type="evidence" value="ECO:0007669"/>
    <property type="project" value="UniProtKB-UniRule"/>
</dbReference>
<dbReference type="GO" id="GO:0000049">
    <property type="term" value="F:tRNA binding"/>
    <property type="evidence" value="ECO:0007669"/>
    <property type="project" value="UniProtKB-UniRule"/>
</dbReference>
<dbReference type="GO" id="GO:0009022">
    <property type="term" value="F:tRNA nucleotidyltransferase activity"/>
    <property type="evidence" value="ECO:0007669"/>
    <property type="project" value="UniProtKB-UniRule"/>
</dbReference>
<dbReference type="GO" id="GO:0016075">
    <property type="term" value="P:rRNA catabolic process"/>
    <property type="evidence" value="ECO:0007669"/>
    <property type="project" value="UniProtKB-UniRule"/>
</dbReference>
<dbReference type="GO" id="GO:0006364">
    <property type="term" value="P:rRNA processing"/>
    <property type="evidence" value="ECO:0007669"/>
    <property type="project" value="UniProtKB-KW"/>
</dbReference>
<dbReference type="GO" id="GO:0008033">
    <property type="term" value="P:tRNA processing"/>
    <property type="evidence" value="ECO:0007669"/>
    <property type="project" value="UniProtKB-UniRule"/>
</dbReference>
<dbReference type="CDD" id="cd11362">
    <property type="entry name" value="RNase_PH_bact"/>
    <property type="match status" value="1"/>
</dbReference>
<dbReference type="FunFam" id="3.30.230.70:FF:000003">
    <property type="entry name" value="Ribonuclease PH"/>
    <property type="match status" value="1"/>
</dbReference>
<dbReference type="Gene3D" id="3.30.230.70">
    <property type="entry name" value="GHMP Kinase, N-terminal domain"/>
    <property type="match status" value="1"/>
</dbReference>
<dbReference type="HAMAP" id="MF_00564">
    <property type="entry name" value="RNase_PH"/>
    <property type="match status" value="1"/>
</dbReference>
<dbReference type="InterPro" id="IPR001247">
    <property type="entry name" value="ExoRNase_PH_dom1"/>
</dbReference>
<dbReference type="InterPro" id="IPR015847">
    <property type="entry name" value="ExoRNase_PH_dom2"/>
</dbReference>
<dbReference type="InterPro" id="IPR036345">
    <property type="entry name" value="ExoRNase_PH_dom2_sf"/>
</dbReference>
<dbReference type="InterPro" id="IPR027408">
    <property type="entry name" value="PNPase/RNase_PH_dom_sf"/>
</dbReference>
<dbReference type="InterPro" id="IPR020568">
    <property type="entry name" value="Ribosomal_Su5_D2-typ_SF"/>
</dbReference>
<dbReference type="InterPro" id="IPR050080">
    <property type="entry name" value="RNase_PH"/>
</dbReference>
<dbReference type="InterPro" id="IPR002381">
    <property type="entry name" value="RNase_PH_bac-type"/>
</dbReference>
<dbReference type="InterPro" id="IPR018336">
    <property type="entry name" value="RNase_PH_CS"/>
</dbReference>
<dbReference type="NCBIfam" id="TIGR01966">
    <property type="entry name" value="RNasePH"/>
    <property type="match status" value="1"/>
</dbReference>
<dbReference type="PANTHER" id="PTHR11953">
    <property type="entry name" value="EXOSOME COMPLEX COMPONENT"/>
    <property type="match status" value="1"/>
</dbReference>
<dbReference type="PANTHER" id="PTHR11953:SF0">
    <property type="entry name" value="EXOSOME COMPLEX COMPONENT RRP41"/>
    <property type="match status" value="1"/>
</dbReference>
<dbReference type="Pfam" id="PF01138">
    <property type="entry name" value="RNase_PH"/>
    <property type="match status" value="1"/>
</dbReference>
<dbReference type="Pfam" id="PF03725">
    <property type="entry name" value="RNase_PH_C"/>
    <property type="match status" value="1"/>
</dbReference>
<dbReference type="SUPFAM" id="SSF55666">
    <property type="entry name" value="Ribonuclease PH domain 2-like"/>
    <property type="match status" value="1"/>
</dbReference>
<dbReference type="SUPFAM" id="SSF54211">
    <property type="entry name" value="Ribosomal protein S5 domain 2-like"/>
    <property type="match status" value="1"/>
</dbReference>
<dbReference type="PROSITE" id="PS01277">
    <property type="entry name" value="RIBONUCLEASE_PH"/>
    <property type="match status" value="1"/>
</dbReference>